<reference key="1">
    <citation type="journal article" date="2006" name="Proc. Natl. Acad. Sci. U.S.A.">
        <title>Comparative genomics of the lactic acid bacteria.</title>
        <authorList>
            <person name="Makarova K.S."/>
            <person name="Slesarev A."/>
            <person name="Wolf Y.I."/>
            <person name="Sorokin A."/>
            <person name="Mirkin B."/>
            <person name="Koonin E.V."/>
            <person name="Pavlov A."/>
            <person name="Pavlova N."/>
            <person name="Karamychev V."/>
            <person name="Polouchine N."/>
            <person name="Shakhova V."/>
            <person name="Grigoriev I."/>
            <person name="Lou Y."/>
            <person name="Rohksar D."/>
            <person name="Lucas S."/>
            <person name="Huang K."/>
            <person name="Goodstein D.M."/>
            <person name="Hawkins T."/>
            <person name="Plengvidhya V."/>
            <person name="Welker D."/>
            <person name="Hughes J."/>
            <person name="Goh Y."/>
            <person name="Benson A."/>
            <person name="Baldwin K."/>
            <person name="Lee J.-H."/>
            <person name="Diaz-Muniz I."/>
            <person name="Dosti B."/>
            <person name="Smeianov V."/>
            <person name="Wechter W."/>
            <person name="Barabote R."/>
            <person name="Lorca G."/>
            <person name="Altermann E."/>
            <person name="Barrangou R."/>
            <person name="Ganesan B."/>
            <person name="Xie Y."/>
            <person name="Rawsthorne H."/>
            <person name="Tamir D."/>
            <person name="Parker C."/>
            <person name="Breidt F."/>
            <person name="Broadbent J.R."/>
            <person name="Hutkins R."/>
            <person name="O'Sullivan D."/>
            <person name="Steele J."/>
            <person name="Unlu G."/>
            <person name="Saier M.H. Jr."/>
            <person name="Klaenhammer T."/>
            <person name="Richardson P."/>
            <person name="Kozyavkin S."/>
            <person name="Weimer B.C."/>
            <person name="Mills D.A."/>
        </authorList>
    </citation>
    <scope>NUCLEOTIDE SEQUENCE [LARGE SCALE GENOMIC DNA]</scope>
    <source>
        <strain>ATCC 367 / BCRC 12310 / CIP 105137 / JCM 1170 / LMG 11437 / NCIMB 947 / NCTC 947</strain>
    </source>
</reference>
<accession>Q03RL6</accession>
<dbReference type="EMBL" id="CP000416">
    <property type="protein sequence ID" value="ABJ64156.1"/>
    <property type="molecule type" value="Genomic_DNA"/>
</dbReference>
<dbReference type="RefSeq" id="WP_011667786.1">
    <property type="nucleotide sequence ID" value="NC_008497.1"/>
</dbReference>
<dbReference type="SMR" id="Q03RL6"/>
<dbReference type="STRING" id="387344.LVIS_1023"/>
<dbReference type="GeneID" id="56992757"/>
<dbReference type="KEGG" id="lbr:LVIS_1023"/>
<dbReference type="eggNOG" id="COG0333">
    <property type="taxonomic scope" value="Bacteria"/>
</dbReference>
<dbReference type="HOGENOM" id="CLU_129084_1_3_9"/>
<dbReference type="Proteomes" id="UP000001652">
    <property type="component" value="Chromosome"/>
</dbReference>
<dbReference type="GO" id="GO:0015934">
    <property type="term" value="C:large ribosomal subunit"/>
    <property type="evidence" value="ECO:0007669"/>
    <property type="project" value="InterPro"/>
</dbReference>
<dbReference type="GO" id="GO:0003735">
    <property type="term" value="F:structural constituent of ribosome"/>
    <property type="evidence" value="ECO:0007669"/>
    <property type="project" value="InterPro"/>
</dbReference>
<dbReference type="GO" id="GO:0006412">
    <property type="term" value="P:translation"/>
    <property type="evidence" value="ECO:0007669"/>
    <property type="project" value="UniProtKB-UniRule"/>
</dbReference>
<dbReference type="HAMAP" id="MF_00340">
    <property type="entry name" value="Ribosomal_bL32"/>
    <property type="match status" value="1"/>
</dbReference>
<dbReference type="InterPro" id="IPR002677">
    <property type="entry name" value="Ribosomal_bL32"/>
</dbReference>
<dbReference type="InterPro" id="IPR044957">
    <property type="entry name" value="Ribosomal_bL32_bact"/>
</dbReference>
<dbReference type="InterPro" id="IPR011332">
    <property type="entry name" value="Ribosomal_zn-bd"/>
</dbReference>
<dbReference type="NCBIfam" id="TIGR01031">
    <property type="entry name" value="rpmF_bact"/>
    <property type="match status" value="1"/>
</dbReference>
<dbReference type="PANTHER" id="PTHR35534">
    <property type="entry name" value="50S RIBOSOMAL PROTEIN L32"/>
    <property type="match status" value="1"/>
</dbReference>
<dbReference type="PANTHER" id="PTHR35534:SF1">
    <property type="entry name" value="LARGE RIBOSOMAL SUBUNIT PROTEIN BL32"/>
    <property type="match status" value="1"/>
</dbReference>
<dbReference type="Pfam" id="PF01783">
    <property type="entry name" value="Ribosomal_L32p"/>
    <property type="match status" value="1"/>
</dbReference>
<dbReference type="SUPFAM" id="SSF57829">
    <property type="entry name" value="Zn-binding ribosomal proteins"/>
    <property type="match status" value="1"/>
</dbReference>
<proteinExistence type="inferred from homology"/>
<organism>
    <name type="scientific">Levilactobacillus brevis (strain ATCC 367 / BCRC 12310 / CIP 105137 / JCM 1170 / LMG 11437 / NCIMB 947 / NCTC 947)</name>
    <name type="common">Lactobacillus brevis</name>
    <dbReference type="NCBI Taxonomy" id="387344"/>
    <lineage>
        <taxon>Bacteria</taxon>
        <taxon>Bacillati</taxon>
        <taxon>Bacillota</taxon>
        <taxon>Bacilli</taxon>
        <taxon>Lactobacillales</taxon>
        <taxon>Lactobacillaceae</taxon>
        <taxon>Levilactobacillus</taxon>
    </lineage>
</organism>
<keyword id="KW-1185">Reference proteome</keyword>
<keyword id="KW-0687">Ribonucleoprotein</keyword>
<keyword id="KW-0689">Ribosomal protein</keyword>
<protein>
    <recommendedName>
        <fullName evidence="1">Large ribosomal subunit protein bL32</fullName>
    </recommendedName>
    <alternativeName>
        <fullName evidence="2">50S ribosomal protein L32</fullName>
    </alternativeName>
</protein>
<comment type="similarity">
    <text evidence="1">Belongs to the bacterial ribosomal protein bL32 family.</text>
</comment>
<gene>
    <name evidence="1" type="primary">rpmF</name>
    <name type="ordered locus">LVIS_1023</name>
</gene>
<evidence type="ECO:0000255" key="1">
    <source>
        <dbReference type="HAMAP-Rule" id="MF_00340"/>
    </source>
</evidence>
<evidence type="ECO:0000305" key="2"/>
<feature type="chain" id="PRO_0000296482" description="Large ribosomal subunit protein bL32">
    <location>
        <begin position="1"/>
        <end position="62"/>
    </location>
</feature>
<sequence length="62" mass="6823">MAVPARKTSKTKKRMRRGHIKLATLNLAPCPNCGELRKSHVVCPSCGFYDGRQVVAVKNANN</sequence>
<name>RL32_LEVBA</name>